<comment type="function">
    <text evidence="1">Involved in pseudohyphal growth, cell wall metabolism and required for the separation of the mother and daughter cells.</text>
</comment>
<comment type="subcellular location">
    <subcellularLocation>
        <location>Secreted</location>
        <location>Cell wall</location>
    </subcellularLocation>
    <subcellularLocation>
        <location evidence="1">Membrane</location>
        <topology evidence="1">Lipid-anchor</topology>
        <topology evidence="1">GPI-anchor</topology>
    </subcellularLocation>
    <text evidence="1">GPI-anchored cell wall protein (GPI-CWP).</text>
</comment>
<proteinExistence type="inferred from homology"/>
<gene>
    <name type="primary">DSE2</name>
    <name type="ordered locus">KLLA0D07942g</name>
</gene>
<reference key="1">
    <citation type="journal article" date="2004" name="Nature">
        <title>Genome evolution in yeasts.</title>
        <authorList>
            <person name="Dujon B."/>
            <person name="Sherman D."/>
            <person name="Fischer G."/>
            <person name="Durrens P."/>
            <person name="Casaregola S."/>
            <person name="Lafontaine I."/>
            <person name="de Montigny J."/>
            <person name="Marck C."/>
            <person name="Neuveglise C."/>
            <person name="Talla E."/>
            <person name="Goffard N."/>
            <person name="Frangeul L."/>
            <person name="Aigle M."/>
            <person name="Anthouard V."/>
            <person name="Babour A."/>
            <person name="Barbe V."/>
            <person name="Barnay S."/>
            <person name="Blanchin S."/>
            <person name="Beckerich J.-M."/>
            <person name="Beyne E."/>
            <person name="Bleykasten C."/>
            <person name="Boisrame A."/>
            <person name="Boyer J."/>
            <person name="Cattolico L."/>
            <person name="Confanioleri F."/>
            <person name="de Daruvar A."/>
            <person name="Despons L."/>
            <person name="Fabre E."/>
            <person name="Fairhead C."/>
            <person name="Ferry-Dumazet H."/>
            <person name="Groppi A."/>
            <person name="Hantraye F."/>
            <person name="Hennequin C."/>
            <person name="Jauniaux N."/>
            <person name="Joyet P."/>
            <person name="Kachouri R."/>
            <person name="Kerrest A."/>
            <person name="Koszul R."/>
            <person name="Lemaire M."/>
            <person name="Lesur I."/>
            <person name="Ma L."/>
            <person name="Muller H."/>
            <person name="Nicaud J.-M."/>
            <person name="Nikolski M."/>
            <person name="Oztas S."/>
            <person name="Ozier-Kalogeropoulos O."/>
            <person name="Pellenz S."/>
            <person name="Potier S."/>
            <person name="Richard G.-F."/>
            <person name="Straub M.-L."/>
            <person name="Suleau A."/>
            <person name="Swennen D."/>
            <person name="Tekaia F."/>
            <person name="Wesolowski-Louvel M."/>
            <person name="Westhof E."/>
            <person name="Wirth B."/>
            <person name="Zeniou-Meyer M."/>
            <person name="Zivanovic Y."/>
            <person name="Bolotin-Fukuhara M."/>
            <person name="Thierry A."/>
            <person name="Bouchier C."/>
            <person name="Caudron B."/>
            <person name="Scarpelli C."/>
            <person name="Gaillardin C."/>
            <person name="Weissenbach J."/>
            <person name="Wincker P."/>
            <person name="Souciet J.-L."/>
        </authorList>
    </citation>
    <scope>NUCLEOTIDE SEQUENCE [LARGE SCALE GENOMIC DNA]</scope>
    <source>
        <strain>ATCC 8585 / CBS 2359 / DSM 70799 / NBRC 1267 / NRRL Y-1140 / WM37</strain>
    </source>
</reference>
<organism>
    <name type="scientific">Kluyveromyces lactis (strain ATCC 8585 / CBS 2359 / DSM 70799 / NBRC 1267 / NRRL Y-1140 / WM37)</name>
    <name type="common">Yeast</name>
    <name type="synonym">Candida sphaerica</name>
    <dbReference type="NCBI Taxonomy" id="284590"/>
    <lineage>
        <taxon>Eukaryota</taxon>
        <taxon>Fungi</taxon>
        <taxon>Dikarya</taxon>
        <taxon>Ascomycota</taxon>
        <taxon>Saccharomycotina</taxon>
        <taxon>Saccharomycetes</taxon>
        <taxon>Saccharomycetales</taxon>
        <taxon>Saccharomycetaceae</taxon>
        <taxon>Kluyveromyces</taxon>
    </lineage>
</organism>
<evidence type="ECO:0000250" key="1"/>
<evidence type="ECO:0000255" key="2"/>
<evidence type="ECO:0000256" key="3">
    <source>
        <dbReference type="SAM" id="MobiDB-lite"/>
    </source>
</evidence>
<dbReference type="EMBL" id="CR382124">
    <property type="protein sequence ID" value="CAH00513.1"/>
    <property type="molecule type" value="Genomic_DNA"/>
</dbReference>
<dbReference type="RefSeq" id="XP_453417.1">
    <property type="nucleotide sequence ID" value="XM_453417.1"/>
</dbReference>
<dbReference type="FunCoup" id="Q6CRM2">
    <property type="interactions" value="48"/>
</dbReference>
<dbReference type="STRING" id="284590.Q6CRM2"/>
<dbReference type="PaxDb" id="284590-Q6CRM2"/>
<dbReference type="KEGG" id="kla:KLLA0_D07942g"/>
<dbReference type="eggNOG" id="ENOG502S41K">
    <property type="taxonomic scope" value="Eukaryota"/>
</dbReference>
<dbReference type="HOGENOM" id="CLU_1031328_0_0_1"/>
<dbReference type="InParanoid" id="Q6CRM2"/>
<dbReference type="OMA" id="TRVYPIT"/>
<dbReference type="Proteomes" id="UP000000598">
    <property type="component" value="Chromosome D"/>
</dbReference>
<dbReference type="GO" id="GO:0005576">
    <property type="term" value="C:extracellular region"/>
    <property type="evidence" value="ECO:0007669"/>
    <property type="project" value="UniProtKB-KW"/>
</dbReference>
<dbReference type="GO" id="GO:0098552">
    <property type="term" value="C:side of membrane"/>
    <property type="evidence" value="ECO:0007669"/>
    <property type="project" value="UniProtKB-KW"/>
</dbReference>
<dbReference type="GO" id="GO:0071555">
    <property type="term" value="P:cell wall organization"/>
    <property type="evidence" value="ECO:0007669"/>
    <property type="project" value="UniProtKB-KW"/>
</dbReference>
<dbReference type="InterPro" id="IPR026225">
    <property type="entry name" value="DSE2"/>
</dbReference>
<dbReference type="PRINTS" id="PR02066">
    <property type="entry name" value="DSEPROTEIN2"/>
</dbReference>
<accession>Q6CRM2</accession>
<feature type="signal peptide" evidence="2">
    <location>
        <begin position="1"/>
        <end position="23"/>
    </location>
</feature>
<feature type="chain" id="PRO_0000285353" description="Protein DSE2">
    <location>
        <begin position="24"/>
        <end position="247"/>
    </location>
</feature>
<feature type="propeptide" id="PRO_0000285354" description="Removed in mature form" evidence="2">
    <location>
        <begin position="248"/>
        <end position="264"/>
    </location>
</feature>
<feature type="region of interest" description="Disordered" evidence="3">
    <location>
        <begin position="75"/>
        <end position="213"/>
    </location>
</feature>
<feature type="compositionally biased region" description="Low complexity" evidence="3">
    <location>
        <begin position="75"/>
        <end position="92"/>
    </location>
</feature>
<feature type="compositionally biased region" description="Acidic residues" evidence="3">
    <location>
        <begin position="93"/>
        <end position="104"/>
    </location>
</feature>
<feature type="compositionally biased region" description="Low complexity" evidence="3">
    <location>
        <begin position="105"/>
        <end position="147"/>
    </location>
</feature>
<feature type="compositionally biased region" description="Low complexity" evidence="3">
    <location>
        <begin position="157"/>
        <end position="168"/>
    </location>
</feature>
<feature type="compositionally biased region" description="Low complexity" evidence="3">
    <location>
        <begin position="178"/>
        <end position="211"/>
    </location>
</feature>
<feature type="lipid moiety-binding region" description="GPI-anchor amidated aspartate" evidence="2">
    <location>
        <position position="247"/>
    </location>
</feature>
<name>DSE2_KLULA</name>
<protein>
    <recommendedName>
        <fullName>Protein DSE2</fullName>
    </recommendedName>
    <alternativeName>
        <fullName>Daughter-specific expression protein 2</fullName>
    </alternativeName>
</protein>
<keyword id="KW-0134">Cell wall</keyword>
<keyword id="KW-0961">Cell wall biogenesis/degradation</keyword>
<keyword id="KW-0325">Glycoprotein</keyword>
<keyword id="KW-0336">GPI-anchor</keyword>
<keyword id="KW-0449">Lipoprotein</keyword>
<keyword id="KW-0472">Membrane</keyword>
<keyword id="KW-1185">Reference proteome</keyword>
<keyword id="KW-0964">Secreted</keyword>
<keyword id="KW-0732">Signal</keyword>
<sequence length="264" mass="28409">MQFKKSSIVSFLSLLGSLTKAAAEVRLVTMDGVVYSYQVVTSTIKPATTYVETIYYTTTYVEAVTLTNHAVTSTTRESVVTSTLSSTSLLPETTEESTQEDEQTTDFTSTTDVESTTDVTSTTAETATLEPTTSDETYTTELTPTTSVKTTLENDDSTSVITTKSTSKANTQSISRKTSTLTPTVTSETTESTSAETLSSTDKSTSTSSSSVLEPMVTNTDCQVVYEYTDDDEYYSTVEISGTESVDAATTYTKTRTVYATISS</sequence>